<accession>Q32C31</accession>
<gene>
    <name evidence="1" type="primary">yggX</name>
    <name type="ordered locus">SDY_3110</name>
</gene>
<feature type="chain" id="PRO_0000246117" description="Probable Fe(2+)-trafficking protein">
    <location>
        <begin position="1"/>
        <end position="91"/>
    </location>
</feature>
<proteinExistence type="inferred from homology"/>
<dbReference type="EMBL" id="CP000034">
    <property type="protein sequence ID" value="ABB63124.1"/>
    <property type="molecule type" value="Genomic_DNA"/>
</dbReference>
<dbReference type="RefSeq" id="WP_000091700.1">
    <property type="nucleotide sequence ID" value="NC_007606.1"/>
</dbReference>
<dbReference type="RefSeq" id="YP_404615.1">
    <property type="nucleotide sequence ID" value="NC_007606.1"/>
</dbReference>
<dbReference type="SMR" id="Q32C31"/>
<dbReference type="STRING" id="300267.SDY_3110"/>
<dbReference type="EnsemblBacteria" id="ABB63124">
    <property type="protein sequence ID" value="ABB63124"/>
    <property type="gene ID" value="SDY_3110"/>
</dbReference>
<dbReference type="KEGG" id="sdy:SDY_3110"/>
<dbReference type="PATRIC" id="fig|300267.13.peg.3719"/>
<dbReference type="HOGENOM" id="CLU_170994_0_0_6"/>
<dbReference type="Proteomes" id="UP000002716">
    <property type="component" value="Chromosome"/>
</dbReference>
<dbReference type="GO" id="GO:0005829">
    <property type="term" value="C:cytosol"/>
    <property type="evidence" value="ECO:0007669"/>
    <property type="project" value="TreeGrafter"/>
</dbReference>
<dbReference type="GO" id="GO:0005506">
    <property type="term" value="F:iron ion binding"/>
    <property type="evidence" value="ECO:0007669"/>
    <property type="project" value="UniProtKB-UniRule"/>
</dbReference>
<dbReference type="GO" id="GO:0034599">
    <property type="term" value="P:cellular response to oxidative stress"/>
    <property type="evidence" value="ECO:0007669"/>
    <property type="project" value="TreeGrafter"/>
</dbReference>
<dbReference type="FunFam" id="1.10.3880.10:FF:000001">
    <property type="entry name" value="Probable Fe(2+)-trafficking protein"/>
    <property type="match status" value="1"/>
</dbReference>
<dbReference type="Gene3D" id="1.10.3880.10">
    <property type="entry name" value="Fe(II) trafficking protein YggX"/>
    <property type="match status" value="1"/>
</dbReference>
<dbReference type="HAMAP" id="MF_00686">
    <property type="entry name" value="Fe_traffic_YggX"/>
    <property type="match status" value="1"/>
</dbReference>
<dbReference type="InterPro" id="IPR007457">
    <property type="entry name" value="Fe_traffick_prot_YggX"/>
</dbReference>
<dbReference type="InterPro" id="IPR036766">
    <property type="entry name" value="Fe_traffick_prot_YggX_sf"/>
</dbReference>
<dbReference type="NCBIfam" id="NF003817">
    <property type="entry name" value="PRK05408.1"/>
    <property type="match status" value="1"/>
</dbReference>
<dbReference type="PANTHER" id="PTHR36965">
    <property type="entry name" value="FE(2+)-TRAFFICKING PROTEIN-RELATED"/>
    <property type="match status" value="1"/>
</dbReference>
<dbReference type="PANTHER" id="PTHR36965:SF1">
    <property type="entry name" value="FE(2+)-TRAFFICKING PROTEIN-RELATED"/>
    <property type="match status" value="1"/>
</dbReference>
<dbReference type="Pfam" id="PF04362">
    <property type="entry name" value="Iron_traffic"/>
    <property type="match status" value="1"/>
</dbReference>
<dbReference type="PIRSF" id="PIRSF029827">
    <property type="entry name" value="Fe_traffic_YggX"/>
    <property type="match status" value="1"/>
</dbReference>
<dbReference type="SUPFAM" id="SSF111148">
    <property type="entry name" value="YggX-like"/>
    <property type="match status" value="1"/>
</dbReference>
<sequence>MSRTIFCTFLQREAEGQDFQLYPGELGKRIYNEISKEAWAQWQHKQTMLINEKKLNMMNAEHRKLLEQEMVNFLFEGKEVHIEGYTPEDKK</sequence>
<name>FETP_SHIDS</name>
<protein>
    <recommendedName>
        <fullName evidence="1">Probable Fe(2+)-trafficking protein</fullName>
    </recommendedName>
</protein>
<evidence type="ECO:0000255" key="1">
    <source>
        <dbReference type="HAMAP-Rule" id="MF_00686"/>
    </source>
</evidence>
<reference key="1">
    <citation type="journal article" date="2005" name="Nucleic Acids Res.">
        <title>Genome dynamics and diversity of Shigella species, the etiologic agents of bacillary dysentery.</title>
        <authorList>
            <person name="Yang F."/>
            <person name="Yang J."/>
            <person name="Zhang X."/>
            <person name="Chen L."/>
            <person name="Jiang Y."/>
            <person name="Yan Y."/>
            <person name="Tang X."/>
            <person name="Wang J."/>
            <person name="Xiong Z."/>
            <person name="Dong J."/>
            <person name="Xue Y."/>
            <person name="Zhu Y."/>
            <person name="Xu X."/>
            <person name="Sun L."/>
            <person name="Chen S."/>
            <person name="Nie H."/>
            <person name="Peng J."/>
            <person name="Xu J."/>
            <person name="Wang Y."/>
            <person name="Yuan Z."/>
            <person name="Wen Y."/>
            <person name="Yao Z."/>
            <person name="Shen Y."/>
            <person name="Qiang B."/>
            <person name="Hou Y."/>
            <person name="Yu J."/>
            <person name="Jin Q."/>
        </authorList>
    </citation>
    <scope>NUCLEOTIDE SEQUENCE [LARGE SCALE GENOMIC DNA]</scope>
    <source>
        <strain>Sd197</strain>
    </source>
</reference>
<organism>
    <name type="scientific">Shigella dysenteriae serotype 1 (strain Sd197)</name>
    <dbReference type="NCBI Taxonomy" id="300267"/>
    <lineage>
        <taxon>Bacteria</taxon>
        <taxon>Pseudomonadati</taxon>
        <taxon>Pseudomonadota</taxon>
        <taxon>Gammaproteobacteria</taxon>
        <taxon>Enterobacterales</taxon>
        <taxon>Enterobacteriaceae</taxon>
        <taxon>Shigella</taxon>
    </lineage>
</organism>
<keyword id="KW-0408">Iron</keyword>
<keyword id="KW-1185">Reference proteome</keyword>
<comment type="function">
    <text evidence="1">Could be a mediator in iron transactions between iron acquisition and iron-requiring processes, such as synthesis and/or repair of Fe-S clusters in biosynthetic enzymes.</text>
</comment>
<comment type="subunit">
    <text evidence="1">Monomer.</text>
</comment>
<comment type="similarity">
    <text evidence="1">Belongs to the Fe(2+)-trafficking protein family.</text>
</comment>